<gene>
    <name evidence="1" type="primary">alaS</name>
    <name type="ordered locus">Suden_1898</name>
</gene>
<dbReference type="EC" id="6.1.1.7" evidence="1"/>
<dbReference type="EMBL" id="CP000153">
    <property type="protein sequence ID" value="ABB45172.1"/>
    <property type="status" value="ALT_INIT"/>
    <property type="molecule type" value="Genomic_DNA"/>
</dbReference>
<dbReference type="RefSeq" id="WP_041672319.1">
    <property type="nucleotide sequence ID" value="NC_007575.1"/>
</dbReference>
<dbReference type="SMR" id="Q30PA9"/>
<dbReference type="STRING" id="326298.Suden_1898"/>
<dbReference type="KEGG" id="tdn:Suden_1898"/>
<dbReference type="eggNOG" id="COG0013">
    <property type="taxonomic scope" value="Bacteria"/>
</dbReference>
<dbReference type="HOGENOM" id="CLU_004485_1_1_7"/>
<dbReference type="OrthoDB" id="9803884at2"/>
<dbReference type="Proteomes" id="UP000002714">
    <property type="component" value="Chromosome"/>
</dbReference>
<dbReference type="GO" id="GO:0005829">
    <property type="term" value="C:cytosol"/>
    <property type="evidence" value="ECO:0007669"/>
    <property type="project" value="TreeGrafter"/>
</dbReference>
<dbReference type="GO" id="GO:0004813">
    <property type="term" value="F:alanine-tRNA ligase activity"/>
    <property type="evidence" value="ECO:0007669"/>
    <property type="project" value="UniProtKB-UniRule"/>
</dbReference>
<dbReference type="GO" id="GO:0002161">
    <property type="term" value="F:aminoacyl-tRNA deacylase activity"/>
    <property type="evidence" value="ECO:0007669"/>
    <property type="project" value="TreeGrafter"/>
</dbReference>
<dbReference type="GO" id="GO:0005524">
    <property type="term" value="F:ATP binding"/>
    <property type="evidence" value="ECO:0007669"/>
    <property type="project" value="UniProtKB-UniRule"/>
</dbReference>
<dbReference type="GO" id="GO:0000049">
    <property type="term" value="F:tRNA binding"/>
    <property type="evidence" value="ECO:0007669"/>
    <property type="project" value="UniProtKB-KW"/>
</dbReference>
<dbReference type="GO" id="GO:0008270">
    <property type="term" value="F:zinc ion binding"/>
    <property type="evidence" value="ECO:0007669"/>
    <property type="project" value="UniProtKB-UniRule"/>
</dbReference>
<dbReference type="GO" id="GO:0006419">
    <property type="term" value="P:alanyl-tRNA aminoacylation"/>
    <property type="evidence" value="ECO:0007669"/>
    <property type="project" value="UniProtKB-UniRule"/>
</dbReference>
<dbReference type="GO" id="GO:0045892">
    <property type="term" value="P:negative regulation of DNA-templated transcription"/>
    <property type="evidence" value="ECO:0007669"/>
    <property type="project" value="TreeGrafter"/>
</dbReference>
<dbReference type="CDD" id="cd00673">
    <property type="entry name" value="AlaRS_core"/>
    <property type="match status" value="1"/>
</dbReference>
<dbReference type="FunFam" id="3.10.310.40:FF:000001">
    <property type="entry name" value="Alanine--tRNA ligase"/>
    <property type="match status" value="1"/>
</dbReference>
<dbReference type="FunFam" id="3.30.54.20:FF:000001">
    <property type="entry name" value="Alanine--tRNA ligase"/>
    <property type="match status" value="1"/>
</dbReference>
<dbReference type="FunFam" id="3.30.930.10:FF:000004">
    <property type="entry name" value="Alanine--tRNA ligase"/>
    <property type="match status" value="1"/>
</dbReference>
<dbReference type="FunFam" id="3.30.980.10:FF:000004">
    <property type="entry name" value="Alanine--tRNA ligase, cytoplasmic"/>
    <property type="match status" value="1"/>
</dbReference>
<dbReference type="Gene3D" id="2.40.30.130">
    <property type="match status" value="1"/>
</dbReference>
<dbReference type="Gene3D" id="3.10.310.40">
    <property type="match status" value="1"/>
</dbReference>
<dbReference type="Gene3D" id="3.30.54.20">
    <property type="match status" value="1"/>
</dbReference>
<dbReference type="Gene3D" id="3.30.930.10">
    <property type="entry name" value="Bira Bifunctional Protein, Domain 2"/>
    <property type="match status" value="1"/>
</dbReference>
<dbReference type="Gene3D" id="3.30.980.10">
    <property type="entry name" value="Threonyl-trna Synthetase, Chain A, domain 2"/>
    <property type="match status" value="1"/>
</dbReference>
<dbReference type="HAMAP" id="MF_00036_B">
    <property type="entry name" value="Ala_tRNA_synth_B"/>
    <property type="match status" value="1"/>
</dbReference>
<dbReference type="InterPro" id="IPR045864">
    <property type="entry name" value="aa-tRNA-synth_II/BPL/LPL"/>
</dbReference>
<dbReference type="InterPro" id="IPR002318">
    <property type="entry name" value="Ala-tRNA-lgiase_IIc"/>
</dbReference>
<dbReference type="InterPro" id="IPR018162">
    <property type="entry name" value="Ala-tRNA-ligase_IIc_anticod-bd"/>
</dbReference>
<dbReference type="InterPro" id="IPR018165">
    <property type="entry name" value="Ala-tRNA-synth_IIc_core"/>
</dbReference>
<dbReference type="InterPro" id="IPR018164">
    <property type="entry name" value="Ala-tRNA-synth_IIc_N"/>
</dbReference>
<dbReference type="InterPro" id="IPR050058">
    <property type="entry name" value="Ala-tRNA_ligase"/>
</dbReference>
<dbReference type="InterPro" id="IPR023033">
    <property type="entry name" value="Ala_tRNA_ligase_euk/bac"/>
</dbReference>
<dbReference type="InterPro" id="IPR003156">
    <property type="entry name" value="DHHA1_dom"/>
</dbReference>
<dbReference type="InterPro" id="IPR018163">
    <property type="entry name" value="Thr/Ala-tRNA-synth_IIc_edit"/>
</dbReference>
<dbReference type="InterPro" id="IPR009000">
    <property type="entry name" value="Transl_B-barrel_sf"/>
</dbReference>
<dbReference type="InterPro" id="IPR012947">
    <property type="entry name" value="tRNA_SAD"/>
</dbReference>
<dbReference type="NCBIfam" id="TIGR00344">
    <property type="entry name" value="alaS"/>
    <property type="match status" value="1"/>
</dbReference>
<dbReference type="PANTHER" id="PTHR11777:SF9">
    <property type="entry name" value="ALANINE--TRNA LIGASE, CYTOPLASMIC"/>
    <property type="match status" value="1"/>
</dbReference>
<dbReference type="PANTHER" id="PTHR11777">
    <property type="entry name" value="ALANYL-TRNA SYNTHETASE"/>
    <property type="match status" value="1"/>
</dbReference>
<dbReference type="Pfam" id="PF02272">
    <property type="entry name" value="DHHA1"/>
    <property type="match status" value="1"/>
</dbReference>
<dbReference type="Pfam" id="PF01411">
    <property type="entry name" value="tRNA-synt_2c"/>
    <property type="match status" value="1"/>
</dbReference>
<dbReference type="Pfam" id="PF07973">
    <property type="entry name" value="tRNA_SAD"/>
    <property type="match status" value="1"/>
</dbReference>
<dbReference type="PRINTS" id="PR00980">
    <property type="entry name" value="TRNASYNTHALA"/>
</dbReference>
<dbReference type="SMART" id="SM00863">
    <property type="entry name" value="tRNA_SAD"/>
    <property type="match status" value="1"/>
</dbReference>
<dbReference type="SUPFAM" id="SSF55681">
    <property type="entry name" value="Class II aaRS and biotin synthetases"/>
    <property type="match status" value="1"/>
</dbReference>
<dbReference type="SUPFAM" id="SSF101353">
    <property type="entry name" value="Putative anticodon-binding domain of alanyl-tRNA synthetase (AlaRS)"/>
    <property type="match status" value="1"/>
</dbReference>
<dbReference type="SUPFAM" id="SSF55186">
    <property type="entry name" value="ThrRS/AlaRS common domain"/>
    <property type="match status" value="1"/>
</dbReference>
<dbReference type="SUPFAM" id="SSF50447">
    <property type="entry name" value="Translation proteins"/>
    <property type="match status" value="1"/>
</dbReference>
<dbReference type="PROSITE" id="PS50860">
    <property type="entry name" value="AA_TRNA_LIGASE_II_ALA"/>
    <property type="match status" value="1"/>
</dbReference>
<name>SYA_SULDN</name>
<organism>
    <name type="scientific">Sulfurimonas denitrificans (strain ATCC 33889 / DSM 1251)</name>
    <name type="common">Thiomicrospira denitrificans (strain ATCC 33889 / DSM 1251)</name>
    <dbReference type="NCBI Taxonomy" id="326298"/>
    <lineage>
        <taxon>Bacteria</taxon>
        <taxon>Pseudomonadati</taxon>
        <taxon>Campylobacterota</taxon>
        <taxon>Epsilonproteobacteria</taxon>
        <taxon>Campylobacterales</taxon>
        <taxon>Sulfurimonadaceae</taxon>
        <taxon>Sulfurimonas</taxon>
    </lineage>
</organism>
<accession>Q30PA9</accession>
<comment type="function">
    <text evidence="1">Catalyzes the attachment of alanine to tRNA(Ala) in a two-step reaction: alanine is first activated by ATP to form Ala-AMP and then transferred to the acceptor end of tRNA(Ala). Also edits incorrectly charged Ser-tRNA(Ala) and Gly-tRNA(Ala) via its editing domain.</text>
</comment>
<comment type="catalytic activity">
    <reaction evidence="1">
        <text>tRNA(Ala) + L-alanine + ATP = L-alanyl-tRNA(Ala) + AMP + diphosphate</text>
        <dbReference type="Rhea" id="RHEA:12540"/>
        <dbReference type="Rhea" id="RHEA-COMP:9657"/>
        <dbReference type="Rhea" id="RHEA-COMP:9923"/>
        <dbReference type="ChEBI" id="CHEBI:30616"/>
        <dbReference type="ChEBI" id="CHEBI:33019"/>
        <dbReference type="ChEBI" id="CHEBI:57972"/>
        <dbReference type="ChEBI" id="CHEBI:78442"/>
        <dbReference type="ChEBI" id="CHEBI:78497"/>
        <dbReference type="ChEBI" id="CHEBI:456215"/>
        <dbReference type="EC" id="6.1.1.7"/>
    </reaction>
</comment>
<comment type="cofactor">
    <cofactor evidence="1">
        <name>Zn(2+)</name>
        <dbReference type="ChEBI" id="CHEBI:29105"/>
    </cofactor>
    <text evidence="1">Binds 1 zinc ion per subunit.</text>
</comment>
<comment type="subcellular location">
    <subcellularLocation>
        <location evidence="1">Cytoplasm</location>
    </subcellularLocation>
</comment>
<comment type="domain">
    <text evidence="1">Consists of three domains; the N-terminal catalytic domain, the editing domain and the C-terminal C-Ala domain. The editing domain removes incorrectly charged amino acids, while the C-Ala domain, along with tRNA(Ala), serves as a bridge to cooperatively bring together the editing and aminoacylation centers thus stimulating deacylation of misacylated tRNAs.</text>
</comment>
<comment type="similarity">
    <text evidence="1">Belongs to the class-II aminoacyl-tRNA synthetase family.</text>
</comment>
<comment type="sequence caution" evidence="2">
    <conflict type="erroneous initiation">
        <sequence resource="EMBL-CDS" id="ABB45172"/>
    </conflict>
</comment>
<reference key="1">
    <citation type="journal article" date="2008" name="Appl. Environ. Microbiol.">
        <title>Genome of the epsilonproteobacterial chemolithoautotroph Sulfurimonas denitrificans.</title>
        <authorList>
            <person name="Sievert S.M."/>
            <person name="Scott K.M."/>
            <person name="Klotz M.G."/>
            <person name="Chain P.S.G."/>
            <person name="Hauser L.J."/>
            <person name="Hemp J."/>
            <person name="Huegler M."/>
            <person name="Land M."/>
            <person name="Lapidus A."/>
            <person name="Larimer F.W."/>
            <person name="Lucas S."/>
            <person name="Malfatti S.A."/>
            <person name="Meyer F."/>
            <person name="Paulsen I.T."/>
            <person name="Ren Q."/>
            <person name="Simon J."/>
            <person name="Bailey K."/>
            <person name="Diaz E."/>
            <person name="Fitzpatrick K.A."/>
            <person name="Glover B."/>
            <person name="Gwatney N."/>
            <person name="Korajkic A."/>
            <person name="Long A."/>
            <person name="Mobberley J.M."/>
            <person name="Pantry S.N."/>
            <person name="Pazder G."/>
            <person name="Peterson S."/>
            <person name="Quintanilla J.D."/>
            <person name="Sprinkle R."/>
            <person name="Stephens J."/>
            <person name="Thomas P."/>
            <person name="Vaughn R."/>
            <person name="Weber M.J."/>
            <person name="Wooten L.L."/>
        </authorList>
    </citation>
    <scope>NUCLEOTIDE SEQUENCE [LARGE SCALE GENOMIC DNA]</scope>
    <source>
        <strain>ATCC 33889 / DSM 1251</strain>
    </source>
</reference>
<evidence type="ECO:0000255" key="1">
    <source>
        <dbReference type="HAMAP-Rule" id="MF_00036"/>
    </source>
</evidence>
<evidence type="ECO:0000305" key="2"/>
<proteinExistence type="inferred from homology"/>
<keyword id="KW-0030">Aminoacyl-tRNA synthetase</keyword>
<keyword id="KW-0067">ATP-binding</keyword>
<keyword id="KW-0963">Cytoplasm</keyword>
<keyword id="KW-0436">Ligase</keyword>
<keyword id="KW-0479">Metal-binding</keyword>
<keyword id="KW-0547">Nucleotide-binding</keyword>
<keyword id="KW-0648">Protein biosynthesis</keyword>
<keyword id="KW-1185">Reference proteome</keyword>
<keyword id="KW-0694">RNA-binding</keyword>
<keyword id="KW-0820">tRNA-binding</keyword>
<keyword id="KW-0862">Zinc</keyword>
<feature type="chain" id="PRO_0000347833" description="Alanine--tRNA ligase">
    <location>
        <begin position="1"/>
        <end position="849"/>
    </location>
</feature>
<feature type="binding site" evidence="1">
    <location>
        <position position="551"/>
    </location>
    <ligand>
        <name>Zn(2+)</name>
        <dbReference type="ChEBI" id="CHEBI:29105"/>
    </ligand>
</feature>
<feature type="binding site" evidence="1">
    <location>
        <position position="555"/>
    </location>
    <ligand>
        <name>Zn(2+)</name>
        <dbReference type="ChEBI" id="CHEBI:29105"/>
    </ligand>
</feature>
<feature type="binding site" evidence="1">
    <location>
        <position position="653"/>
    </location>
    <ligand>
        <name>Zn(2+)</name>
        <dbReference type="ChEBI" id="CHEBI:29105"/>
    </ligand>
</feature>
<feature type="binding site" evidence="1">
    <location>
        <position position="657"/>
    </location>
    <ligand>
        <name>Zn(2+)</name>
        <dbReference type="ChEBI" id="CHEBI:29105"/>
    </ligand>
</feature>
<sequence>MDIREEFLRFFESKNHDRVESAPLVPDDATLLFNNAGMVPFKSIFTGEVPSPANPRAVSCQTCIRAGGKHNDLENVGYTARHHTFFEMLGNFSFGNYFKEEAIDYAWEFITGVLKFPKEKLWVTVHESDDEAEALWLRHVSIDRIMRLGDKDNFWQMGDTGPCGPCSEIFFDQGAEKFSGPEDYMGGDGDRFLEIWNLVFMQYERSSDGTLTSLPKPSIDTGMGLERVVAISEGVSSNYSSSLFMPIIKKVETLIEKEYVYATGASYRVIADHIRTSLFLLAQGVNFSNEGRGYVLRRILRRAVRHGYLLGFSEPFMFKLVDTVVEIMGGEYDYLAQKSHSVKEQIELEEARFFKTIASGIELFNAELHNTKDIFSGSVAFKLYDTFGFPLDLTEDMLREKNLKLDSAKFEELMQEQRSRAKAAWKGSGDEAVHGDFKELLEKFSENSFVGYESTKQKSRVLALLDESYHHADKLSAGVNGWVFLDTTPFYAQSGGQCGDIGELNGFAKVLDTKKFFGLNLSQISTEKELKVGDEVEAVVDISRGEITKHHSATHLLHAVLFDVLGDHISQAGSLVEASRLRFDFSHPKAISNEELAEIERRVNYEIMRGIRANTEVMSIDEAKKSGAKAQFGEKYGDEVRVVSFGDASIEFCGGVHVENSANIGSFIITKESGVSAGVRRIEAVCGNAAFNYFSEQRELLREVEHEVKNLDILAGVARLKSNIVELKKELHDAESCIKTDIKIQSINGISVVVDELTSGDIKEKIDELKNQHESLCAILFQVKDDKVMMAAGVKGSDAKAGDWIKHIAPLLGGGGGGRADFAQAGGKDISKLSEAKIEALRYITEVIS</sequence>
<protein>
    <recommendedName>
        <fullName evidence="1">Alanine--tRNA ligase</fullName>
        <ecNumber evidence="1">6.1.1.7</ecNumber>
    </recommendedName>
    <alternativeName>
        <fullName evidence="1">Alanyl-tRNA synthetase</fullName>
        <shortName evidence="1">AlaRS</shortName>
    </alternativeName>
</protein>